<accession>P84723</accession>
<accession>P84728</accession>
<gene>
    <name evidence="2" type="primary">clpP</name>
</gene>
<evidence type="ECO:0000250" key="1"/>
<evidence type="ECO:0000250" key="2">
    <source>
        <dbReference type="UniProtKB" id="Q85X43"/>
    </source>
</evidence>
<evidence type="ECO:0000255" key="3"/>
<evidence type="ECO:0000255" key="4">
    <source>
        <dbReference type="PROSITE-ProRule" id="PRU10085"/>
    </source>
</evidence>
<evidence type="ECO:0000255" key="5">
    <source>
        <dbReference type="PROSITE-ProRule" id="PRU10086"/>
    </source>
</evidence>
<evidence type="ECO:0000269" key="6">
    <source>
    </source>
</evidence>
<evidence type="ECO:0000303" key="7">
    <source>
    </source>
</evidence>
<evidence type="ECO:0000305" key="8"/>
<reference evidence="8" key="1">
    <citation type="journal article" date="2006" name="Mol. Plant Microbe Interact.">
        <title>Proteomic comparison of needles from blister rust-resistant and susceptible Pinus strobus seedlings reveals upregulation of putative disease resistance proteins.</title>
        <authorList>
            <person name="Smith J.A."/>
            <person name="Blanchette R.A."/>
            <person name="Burnes T.A."/>
            <person name="Jacobs J.J."/>
            <person name="Higgins L."/>
            <person name="Witthuhn B.A."/>
            <person name="David A.J."/>
            <person name="Gillman J.H."/>
        </authorList>
    </citation>
    <scope>PROTEIN SEQUENCE</scope>
    <source>
        <tissue evidence="6">Leaf</tissue>
    </source>
</reference>
<keyword id="KW-0150">Chloroplast</keyword>
<keyword id="KW-0903">Direct protein sequencing</keyword>
<keyword id="KW-0378">Hydrolase</keyword>
<keyword id="KW-0934">Plastid</keyword>
<keyword id="KW-0645">Protease</keyword>
<keyword id="KW-0720">Serine protease</keyword>
<dbReference type="EC" id="3.4.21.92"/>
<dbReference type="GO" id="GO:0009507">
    <property type="term" value="C:chloroplast"/>
    <property type="evidence" value="ECO:0007669"/>
    <property type="project" value="UniProtKB-SubCell"/>
</dbReference>
<dbReference type="GO" id="GO:0004252">
    <property type="term" value="F:serine-type endopeptidase activity"/>
    <property type="evidence" value="ECO:0007669"/>
    <property type="project" value="UniProtKB-EC"/>
</dbReference>
<dbReference type="GO" id="GO:0006508">
    <property type="term" value="P:proteolysis"/>
    <property type="evidence" value="ECO:0007669"/>
    <property type="project" value="UniProtKB-KW"/>
</dbReference>
<feature type="chain" id="PRO_0000240627" description="Putative ATP-dependent Clp protease proteolytic subunit">
    <location>
        <begin position="1" status="less than"/>
        <end position="80" status="greater than"/>
    </location>
</feature>
<feature type="active site" evidence="4 5">
    <location>
        <position position="19"/>
    </location>
</feature>
<feature type="non-consecutive residues" evidence="8">
    <location>
        <begin position="15"/>
        <end position="16"/>
    </location>
</feature>
<feature type="non-consecutive residues" evidence="8">
    <location>
        <begin position="26"/>
        <end position="27"/>
    </location>
</feature>
<feature type="non-consecutive residues" evidence="7">
    <location>
        <begin position="35"/>
        <end position="36"/>
    </location>
</feature>
<feature type="non-consecutive residues" evidence="8">
    <location>
        <begin position="43"/>
        <end position="44"/>
    </location>
</feature>
<feature type="non-consecutive residues" evidence="7">
    <location>
        <begin position="53"/>
        <end position="54"/>
    </location>
</feature>
<feature type="non-consecutive residues" evidence="7">
    <location>
        <begin position="61"/>
        <end position="62"/>
    </location>
</feature>
<feature type="non-consecutive residues" evidence="7">
    <location>
        <begin position="72"/>
        <end position="73"/>
    </location>
</feature>
<feature type="non-terminal residue" evidence="7">
    <location>
        <position position="1"/>
    </location>
</feature>
<feature type="non-terminal residue" evidence="7">
    <location>
        <position position="80"/>
    </location>
</feature>
<proteinExistence type="evidence at protein level"/>
<organism>
    <name type="scientific">Pinus strobus</name>
    <name type="common">Eastern white pine</name>
    <dbReference type="NCBI Taxonomy" id="3348"/>
    <lineage>
        <taxon>Eukaryota</taxon>
        <taxon>Viridiplantae</taxon>
        <taxon>Streptophyta</taxon>
        <taxon>Embryophyta</taxon>
        <taxon>Tracheophyta</taxon>
        <taxon>Spermatophyta</taxon>
        <taxon>Pinopsida</taxon>
        <taxon>Pinidae</taxon>
        <taxon>Conifers I</taxon>
        <taxon>Pinales</taxon>
        <taxon>Pinaceae</taxon>
        <taxon>Pinus</taxon>
        <taxon>Pinus subgen. Strobus</taxon>
    </lineage>
</organism>
<name>CLPP_PINST</name>
<comment type="function">
    <text evidence="2">Cleaves peptides in various proteins in a process that requires ATP hydrolysis. Has a chymotrypsin-like activity. Plays a major role in the degradation of misfolded proteins (By similarity).</text>
</comment>
<comment type="catalytic activity">
    <reaction evidence="2 4 5">
        <text>Hydrolysis of proteins to small peptides in the presence of ATP and magnesium. alpha-casein is the usual test substrate. In the absence of ATP, only oligopeptides shorter than five residues are hydrolyzed (such as succinyl-Leu-Tyr-|-NHMec, and Leu-Tyr-Leu-|-Tyr-Trp, in which cleavage of the -Tyr-|-Leu- and -Tyr-|-Trp bonds also occurs).</text>
        <dbReference type="EC" id="3.4.21.92"/>
    </reaction>
</comment>
<comment type="subunit">
    <text>Component of the chloroplastic Clp protease core complex.</text>
</comment>
<comment type="subcellular location">
    <subcellularLocation>
        <location evidence="1">Plastid</location>
        <location evidence="1">Chloroplast</location>
    </subcellularLocation>
</comment>
<comment type="miscellaneous">
    <text evidence="6">On the 2D-gel the determined pI of this protein is: 5.7, its MW is: 22.8 kDa.</text>
</comment>
<comment type="similarity">
    <text evidence="3">Belongs to the peptidase S14 family.</text>
</comment>
<comment type="caution">
    <text evidence="6">The order of the peptides shown is unknown.</text>
</comment>
<protein>
    <recommendedName>
        <fullName>Putative ATP-dependent Clp protease proteolytic subunit</fullName>
        <ecNumber>3.4.21.92</ecNumber>
    </recommendedName>
    <alternativeName>
        <fullName>Endopeptidase Clp</fullName>
    </alternativeName>
    <alternativeName>
        <fullName>PS7/PS12</fullName>
    </alternativeName>
</protein>
<sequence length="80" mass="8790">APTEADATWVDLYNRVMIHQPASSYYAAEMHNEAKTDNPEEVLDLDRDVFMSAAYGIVDTVWYVQAELVNGRGGAVVAGL</sequence>